<reference key="1">
    <citation type="submission" date="2007-04" db="EMBL/GenBank/DDBJ databases">
        <title>Complete sequence of Roseiflexus sp. RS-1.</title>
        <authorList>
            <consortium name="US DOE Joint Genome Institute"/>
            <person name="Copeland A."/>
            <person name="Lucas S."/>
            <person name="Lapidus A."/>
            <person name="Barry K."/>
            <person name="Detter J.C."/>
            <person name="Glavina del Rio T."/>
            <person name="Hammon N."/>
            <person name="Israni S."/>
            <person name="Dalin E."/>
            <person name="Tice H."/>
            <person name="Pitluck S."/>
            <person name="Chertkov O."/>
            <person name="Brettin T."/>
            <person name="Bruce D."/>
            <person name="Han C."/>
            <person name="Schmutz J."/>
            <person name="Larimer F."/>
            <person name="Land M."/>
            <person name="Hauser L."/>
            <person name="Kyrpides N."/>
            <person name="Mikhailova N."/>
            <person name="Bryant D.A."/>
            <person name="Richardson P."/>
        </authorList>
    </citation>
    <scope>NUCLEOTIDE SEQUENCE [LARGE SCALE GENOMIC DNA]</scope>
    <source>
        <strain>RS-1</strain>
    </source>
</reference>
<protein>
    <recommendedName>
        <fullName evidence="1">Large ribosomal subunit protein uL24</fullName>
    </recommendedName>
    <alternativeName>
        <fullName evidence="2">50S ribosomal protein L24</fullName>
    </alternativeName>
</protein>
<sequence length="110" mass="12378">MHVKTGDEVLIITGKDRGKRGKIKEARPKEQRVIVEGLNIVKRHMKPRGPTRPGGIIEMEAPIHVSNVMLICPTCGRASRTGHRFLEETDHKGRPKKVRYCKACDAVIDE</sequence>
<feature type="chain" id="PRO_1000052299" description="Large ribosomal subunit protein uL24">
    <location>
        <begin position="1"/>
        <end position="110"/>
    </location>
</feature>
<name>RL24_ROSS1</name>
<organism>
    <name type="scientific">Roseiflexus sp. (strain RS-1)</name>
    <dbReference type="NCBI Taxonomy" id="357808"/>
    <lineage>
        <taxon>Bacteria</taxon>
        <taxon>Bacillati</taxon>
        <taxon>Chloroflexota</taxon>
        <taxon>Chloroflexia</taxon>
        <taxon>Chloroflexales</taxon>
        <taxon>Roseiflexineae</taxon>
        <taxon>Roseiflexaceae</taxon>
        <taxon>Roseiflexus</taxon>
    </lineage>
</organism>
<comment type="function">
    <text evidence="1">One of two assembly initiator proteins, it binds directly to the 5'-end of the 23S rRNA, where it nucleates assembly of the 50S subunit.</text>
</comment>
<comment type="function">
    <text evidence="1">One of the proteins that surrounds the polypeptide exit tunnel on the outside of the subunit.</text>
</comment>
<comment type="subunit">
    <text evidence="1">Part of the 50S ribosomal subunit.</text>
</comment>
<comment type="similarity">
    <text evidence="1">Belongs to the universal ribosomal protein uL24 family.</text>
</comment>
<keyword id="KW-0687">Ribonucleoprotein</keyword>
<keyword id="KW-0689">Ribosomal protein</keyword>
<keyword id="KW-0694">RNA-binding</keyword>
<keyword id="KW-0699">rRNA-binding</keyword>
<accession>A5USH8</accession>
<gene>
    <name evidence="1" type="primary">rplX</name>
    <name type="ordered locus">RoseRS_1174</name>
</gene>
<dbReference type="EMBL" id="CP000686">
    <property type="protein sequence ID" value="ABQ89581.1"/>
    <property type="molecule type" value="Genomic_DNA"/>
</dbReference>
<dbReference type="RefSeq" id="WP_011955934.1">
    <property type="nucleotide sequence ID" value="NC_009523.1"/>
</dbReference>
<dbReference type="SMR" id="A5USH8"/>
<dbReference type="STRING" id="357808.RoseRS_1174"/>
<dbReference type="KEGG" id="rrs:RoseRS_1174"/>
<dbReference type="eggNOG" id="COG0198">
    <property type="taxonomic scope" value="Bacteria"/>
</dbReference>
<dbReference type="HOGENOM" id="CLU_093315_2_0_0"/>
<dbReference type="OrthoDB" id="9807419at2"/>
<dbReference type="Proteomes" id="UP000006554">
    <property type="component" value="Chromosome"/>
</dbReference>
<dbReference type="GO" id="GO:1990904">
    <property type="term" value="C:ribonucleoprotein complex"/>
    <property type="evidence" value="ECO:0007669"/>
    <property type="project" value="UniProtKB-KW"/>
</dbReference>
<dbReference type="GO" id="GO:0005840">
    <property type="term" value="C:ribosome"/>
    <property type="evidence" value="ECO:0007669"/>
    <property type="project" value="UniProtKB-KW"/>
</dbReference>
<dbReference type="GO" id="GO:0019843">
    <property type="term" value="F:rRNA binding"/>
    <property type="evidence" value="ECO:0007669"/>
    <property type="project" value="UniProtKB-UniRule"/>
</dbReference>
<dbReference type="GO" id="GO:0003735">
    <property type="term" value="F:structural constituent of ribosome"/>
    <property type="evidence" value="ECO:0007669"/>
    <property type="project" value="InterPro"/>
</dbReference>
<dbReference type="GO" id="GO:0006412">
    <property type="term" value="P:translation"/>
    <property type="evidence" value="ECO:0007669"/>
    <property type="project" value="UniProtKB-UniRule"/>
</dbReference>
<dbReference type="CDD" id="cd06089">
    <property type="entry name" value="KOW_RPL26"/>
    <property type="match status" value="1"/>
</dbReference>
<dbReference type="FunFam" id="2.30.30.30:FF:000004">
    <property type="entry name" value="50S ribosomal protein L24"/>
    <property type="match status" value="1"/>
</dbReference>
<dbReference type="Gene3D" id="2.30.30.30">
    <property type="match status" value="1"/>
</dbReference>
<dbReference type="HAMAP" id="MF_01326_B">
    <property type="entry name" value="Ribosomal_uL24_B"/>
    <property type="match status" value="1"/>
</dbReference>
<dbReference type="InterPro" id="IPR005824">
    <property type="entry name" value="KOW"/>
</dbReference>
<dbReference type="InterPro" id="IPR014722">
    <property type="entry name" value="Rib_uL2_dom2"/>
</dbReference>
<dbReference type="InterPro" id="IPR003256">
    <property type="entry name" value="Ribosomal_uL24"/>
</dbReference>
<dbReference type="InterPro" id="IPR005825">
    <property type="entry name" value="Ribosomal_uL24_CS"/>
</dbReference>
<dbReference type="InterPro" id="IPR041988">
    <property type="entry name" value="Ribosomal_uL24_KOW"/>
</dbReference>
<dbReference type="InterPro" id="IPR008991">
    <property type="entry name" value="Translation_prot_SH3-like_sf"/>
</dbReference>
<dbReference type="NCBIfam" id="TIGR01079">
    <property type="entry name" value="rplX_bact"/>
    <property type="match status" value="1"/>
</dbReference>
<dbReference type="PANTHER" id="PTHR12903">
    <property type="entry name" value="MITOCHONDRIAL RIBOSOMAL PROTEIN L24"/>
    <property type="match status" value="1"/>
</dbReference>
<dbReference type="Pfam" id="PF00467">
    <property type="entry name" value="KOW"/>
    <property type="match status" value="1"/>
</dbReference>
<dbReference type="Pfam" id="PF17136">
    <property type="entry name" value="ribosomal_L24"/>
    <property type="match status" value="1"/>
</dbReference>
<dbReference type="SMART" id="SM00739">
    <property type="entry name" value="KOW"/>
    <property type="match status" value="1"/>
</dbReference>
<dbReference type="SUPFAM" id="SSF50104">
    <property type="entry name" value="Translation proteins SH3-like domain"/>
    <property type="match status" value="1"/>
</dbReference>
<dbReference type="PROSITE" id="PS01108">
    <property type="entry name" value="RIBOSOMAL_L24"/>
    <property type="match status" value="1"/>
</dbReference>
<evidence type="ECO:0000255" key="1">
    <source>
        <dbReference type="HAMAP-Rule" id="MF_01326"/>
    </source>
</evidence>
<evidence type="ECO:0000305" key="2"/>
<proteinExistence type="inferred from homology"/>